<accession>B9LWA7</accession>
<proteinExistence type="inferred from homology"/>
<gene>
    <name evidence="1" type="primary">nrdR</name>
    <name type="ordered locus">Hlac_2946</name>
</gene>
<name>NRDR_HALLT</name>
<organism>
    <name type="scientific">Halorubrum lacusprofundi (strain ATCC 49239 / DSM 5036 / JCM 8891 / ACAM 34)</name>
    <dbReference type="NCBI Taxonomy" id="416348"/>
    <lineage>
        <taxon>Archaea</taxon>
        <taxon>Methanobacteriati</taxon>
        <taxon>Methanobacteriota</taxon>
        <taxon>Stenosarchaea group</taxon>
        <taxon>Halobacteria</taxon>
        <taxon>Halobacteriales</taxon>
        <taxon>Haloferacaceae</taxon>
        <taxon>Halorubrum</taxon>
    </lineage>
</organism>
<dbReference type="EMBL" id="CP001366">
    <property type="protein sequence ID" value="ACM58497.1"/>
    <property type="molecule type" value="Genomic_DNA"/>
</dbReference>
<dbReference type="RefSeq" id="WP_015911483.1">
    <property type="nucleotide sequence ID" value="NC_012028.1"/>
</dbReference>
<dbReference type="SMR" id="B9LWA7"/>
<dbReference type="GeneID" id="7398928"/>
<dbReference type="KEGG" id="hla:Hlac_2946"/>
<dbReference type="eggNOG" id="arCOG08098">
    <property type="taxonomic scope" value="Archaea"/>
</dbReference>
<dbReference type="HOGENOM" id="CLU_108412_0_0_2"/>
<dbReference type="Proteomes" id="UP000000740">
    <property type="component" value="Chromosome 2"/>
</dbReference>
<dbReference type="GO" id="GO:0005524">
    <property type="term" value="F:ATP binding"/>
    <property type="evidence" value="ECO:0007669"/>
    <property type="project" value="UniProtKB-KW"/>
</dbReference>
<dbReference type="GO" id="GO:0003677">
    <property type="term" value="F:DNA binding"/>
    <property type="evidence" value="ECO:0007669"/>
    <property type="project" value="UniProtKB-KW"/>
</dbReference>
<dbReference type="GO" id="GO:0008270">
    <property type="term" value="F:zinc ion binding"/>
    <property type="evidence" value="ECO:0007669"/>
    <property type="project" value="UniProtKB-UniRule"/>
</dbReference>
<dbReference type="GO" id="GO:0045892">
    <property type="term" value="P:negative regulation of DNA-templated transcription"/>
    <property type="evidence" value="ECO:0007669"/>
    <property type="project" value="UniProtKB-UniRule"/>
</dbReference>
<dbReference type="HAMAP" id="MF_00440">
    <property type="entry name" value="NrdR"/>
    <property type="match status" value="1"/>
</dbReference>
<dbReference type="InterPro" id="IPR005144">
    <property type="entry name" value="ATP-cone_dom"/>
</dbReference>
<dbReference type="InterPro" id="IPR055173">
    <property type="entry name" value="NrdR-like_N"/>
</dbReference>
<dbReference type="InterPro" id="IPR003796">
    <property type="entry name" value="RNR_NrdR-like"/>
</dbReference>
<dbReference type="NCBIfam" id="TIGR00244">
    <property type="entry name" value="transcriptional regulator NrdR"/>
    <property type="match status" value="1"/>
</dbReference>
<dbReference type="PANTHER" id="PTHR30455">
    <property type="entry name" value="TRANSCRIPTIONAL REPRESSOR NRDR"/>
    <property type="match status" value="1"/>
</dbReference>
<dbReference type="PANTHER" id="PTHR30455:SF2">
    <property type="entry name" value="TRANSCRIPTIONAL REPRESSOR NRDR"/>
    <property type="match status" value="1"/>
</dbReference>
<dbReference type="Pfam" id="PF03477">
    <property type="entry name" value="ATP-cone"/>
    <property type="match status" value="1"/>
</dbReference>
<dbReference type="Pfam" id="PF22811">
    <property type="entry name" value="Zn_ribbon_NrdR"/>
    <property type="match status" value="1"/>
</dbReference>
<dbReference type="PROSITE" id="PS51161">
    <property type="entry name" value="ATP_CONE"/>
    <property type="match status" value="1"/>
</dbReference>
<comment type="function">
    <text evidence="1">Negatively regulates transcription of bacterial ribonucleotide reductase nrd genes and operons by binding to NrdR-boxes.</text>
</comment>
<comment type="cofactor">
    <cofactor evidence="1">
        <name>Zn(2+)</name>
        <dbReference type="ChEBI" id="CHEBI:29105"/>
    </cofactor>
    <text evidence="1">Binds 1 zinc ion.</text>
</comment>
<comment type="similarity">
    <text evidence="1">Belongs to the NrdR family.</text>
</comment>
<evidence type="ECO:0000255" key="1">
    <source>
        <dbReference type="HAMAP-Rule" id="MF_00440"/>
    </source>
</evidence>
<evidence type="ECO:0000256" key="2">
    <source>
        <dbReference type="SAM" id="MobiDB-lite"/>
    </source>
</evidence>
<keyword id="KW-0067">ATP-binding</keyword>
<keyword id="KW-0238">DNA-binding</keyword>
<keyword id="KW-0479">Metal-binding</keyword>
<keyword id="KW-0547">Nucleotide-binding</keyword>
<keyword id="KW-1185">Reference proteome</keyword>
<keyword id="KW-0678">Repressor</keyword>
<keyword id="KW-0804">Transcription</keyword>
<keyword id="KW-0805">Transcription regulation</keyword>
<keyword id="KW-0862">Zinc</keyword>
<keyword id="KW-0863">Zinc-finger</keyword>
<feature type="chain" id="PRO_1000191830" description="Transcriptional repressor NrdR">
    <location>
        <begin position="1"/>
        <end position="162"/>
    </location>
</feature>
<feature type="domain" description="ATP-cone" evidence="1">
    <location>
        <begin position="49"/>
        <end position="139"/>
    </location>
</feature>
<feature type="zinc finger region" evidence="1">
    <location>
        <begin position="3"/>
        <end position="34"/>
    </location>
</feature>
<feature type="region of interest" description="Disordered" evidence="2">
    <location>
        <begin position="1"/>
        <end position="21"/>
    </location>
</feature>
<sequence length="162" mass="18676">MNCPDCGDEQTRVIDTETSADGTSVRRRRECQRCSFRFTTYERPEWDSLQVKKRNGTIEPFNRTKLRAGIERAVEKRDVSETTVTTLVDDIESALQDRETRLVSSSLIGELVSDRLRDLDKVAYIRFVSVYKAFSEPQEFLRELDAVLNAEIDDFEAPNDSQ</sequence>
<protein>
    <recommendedName>
        <fullName evidence="1">Transcriptional repressor NrdR</fullName>
    </recommendedName>
</protein>
<reference key="1">
    <citation type="journal article" date="2016" name="Stand. Genomic Sci.">
        <title>Complete genome sequence of the Antarctic Halorubrum lacusprofundi type strain ACAM 34.</title>
        <authorList>
            <person name="Anderson I.J."/>
            <person name="DasSarma P."/>
            <person name="Lucas S."/>
            <person name="Copeland A."/>
            <person name="Lapidus A."/>
            <person name="Del Rio T.G."/>
            <person name="Tice H."/>
            <person name="Dalin E."/>
            <person name="Bruce D.C."/>
            <person name="Goodwin L."/>
            <person name="Pitluck S."/>
            <person name="Sims D."/>
            <person name="Brettin T.S."/>
            <person name="Detter J.C."/>
            <person name="Han C.S."/>
            <person name="Larimer F."/>
            <person name="Hauser L."/>
            <person name="Land M."/>
            <person name="Ivanova N."/>
            <person name="Richardson P."/>
            <person name="Cavicchioli R."/>
            <person name="DasSarma S."/>
            <person name="Woese C.R."/>
            <person name="Kyrpides N.C."/>
        </authorList>
    </citation>
    <scope>NUCLEOTIDE SEQUENCE [LARGE SCALE GENOMIC DNA]</scope>
    <source>
        <strain>ATCC 49239 / DSM 5036 / JCM 8891 / ACAM 34</strain>
    </source>
</reference>